<reference key="1">
    <citation type="journal article" date="2000" name="Nucleic Acids Res.">
        <title>Complete genome sequence of the alkaliphilic bacterium Bacillus halodurans and genomic sequence comparison with Bacillus subtilis.</title>
        <authorList>
            <person name="Takami H."/>
            <person name="Nakasone K."/>
            <person name="Takaki Y."/>
            <person name="Maeno G."/>
            <person name="Sasaki R."/>
            <person name="Masui N."/>
            <person name="Fuji F."/>
            <person name="Hirama C."/>
            <person name="Nakamura Y."/>
            <person name="Ogasawara N."/>
            <person name="Kuhara S."/>
            <person name="Horikoshi K."/>
        </authorList>
    </citation>
    <scope>NUCLEOTIDE SEQUENCE [LARGE SCALE GENOMIC DNA]</scope>
    <source>
        <strain>ATCC BAA-125 / DSM 18197 / FERM 7344 / JCM 9153 / C-125</strain>
    </source>
</reference>
<name>Y277_HALH5</name>
<comment type="function">
    <text evidence="1">Possible metal-dependent hydrolase.</text>
</comment>
<comment type="cofactor">
    <cofactor evidence="1">
        <name>Zn(2+)</name>
        <dbReference type="ChEBI" id="CHEBI:29105"/>
    </cofactor>
    <text evidence="1">Binds 1 zinc ion per subunit.</text>
</comment>
<comment type="subunit">
    <text evidence="1">Homodimer.</text>
</comment>
<comment type="subcellular location">
    <subcellularLocation>
        <location evidence="1">Cytoplasm</location>
    </subcellularLocation>
</comment>
<comment type="similarity">
    <text evidence="1">Belongs to the metal hydrolase YfiT family.</text>
</comment>
<proteinExistence type="inferred from homology"/>
<evidence type="ECO:0000255" key="1">
    <source>
        <dbReference type="HAMAP-Rule" id="MF_01256"/>
    </source>
</evidence>
<sequence length="171" mass="20300">MDNRYPIGQFNCPSEVQEKDIQMWIKEITTLPSRLHALTVSLDELELTKTYRENSWNVRQLIHHISDSHLNGYMRMKLALTEDNPVVKTYEESEWAKLIDYELPIRVSLQLLESLHERWTYLLKNLTATQLQRTYQYPDGSIMRIEQSIALYAWHGNHHLAHIQQALIRTK</sequence>
<feature type="chain" id="PRO_0000162370" description="Putative metal-dependent hydrolase BH0277">
    <location>
        <begin position="1"/>
        <end position="171"/>
    </location>
</feature>
<feature type="binding site" evidence="1">
    <location>
        <position position="64"/>
    </location>
    <ligand>
        <name>Zn(2+)</name>
        <dbReference type="ChEBI" id="CHEBI:29105"/>
    </ligand>
</feature>
<feature type="binding site" evidence="1">
    <location>
        <position position="155"/>
    </location>
    <ligand>
        <name>Zn(2+)</name>
        <dbReference type="ChEBI" id="CHEBI:29105"/>
    </ligand>
</feature>
<feature type="binding site" evidence="1">
    <location>
        <position position="159"/>
    </location>
    <ligand>
        <name>Zn(2+)</name>
        <dbReference type="ChEBI" id="CHEBI:29105"/>
    </ligand>
</feature>
<protein>
    <recommendedName>
        <fullName evidence="1">Putative metal-dependent hydrolase BH0277</fullName>
        <ecNumber evidence="1">3.-.-.-</ecNumber>
    </recommendedName>
</protein>
<keyword id="KW-0963">Cytoplasm</keyword>
<keyword id="KW-0378">Hydrolase</keyword>
<keyword id="KW-0479">Metal-binding</keyword>
<keyword id="KW-1185">Reference proteome</keyword>
<keyword id="KW-0862">Zinc</keyword>
<gene>
    <name type="ordered locus">BH0277</name>
</gene>
<dbReference type="EC" id="3.-.-.-" evidence="1"/>
<dbReference type="EMBL" id="BA000004">
    <property type="protein sequence ID" value="BAB03996.1"/>
    <property type="molecule type" value="Genomic_DNA"/>
</dbReference>
<dbReference type="PIR" id="E83684">
    <property type="entry name" value="E83684"/>
</dbReference>
<dbReference type="SMR" id="Q9KG38"/>
<dbReference type="STRING" id="272558.gene:10726130"/>
<dbReference type="KEGG" id="bha:BH0277"/>
<dbReference type="eggNOG" id="COG2318">
    <property type="taxonomic scope" value="Bacteria"/>
</dbReference>
<dbReference type="HOGENOM" id="CLU_105789_1_0_9"/>
<dbReference type="OrthoDB" id="9796039at2"/>
<dbReference type="Proteomes" id="UP000001258">
    <property type="component" value="Chromosome"/>
</dbReference>
<dbReference type="GO" id="GO:0005737">
    <property type="term" value="C:cytoplasm"/>
    <property type="evidence" value="ECO:0007669"/>
    <property type="project" value="UniProtKB-SubCell"/>
</dbReference>
<dbReference type="GO" id="GO:0016787">
    <property type="term" value="F:hydrolase activity"/>
    <property type="evidence" value="ECO:0007669"/>
    <property type="project" value="UniProtKB-UniRule"/>
</dbReference>
<dbReference type="GO" id="GO:0008270">
    <property type="term" value="F:zinc ion binding"/>
    <property type="evidence" value="ECO:0007669"/>
    <property type="project" value="UniProtKB-UniRule"/>
</dbReference>
<dbReference type="Gene3D" id="1.20.120.450">
    <property type="entry name" value="dinb family like domain"/>
    <property type="match status" value="1"/>
</dbReference>
<dbReference type="HAMAP" id="MF_01256">
    <property type="entry name" value="YfiT_hydrol"/>
    <property type="match status" value="1"/>
</dbReference>
<dbReference type="InterPro" id="IPR024775">
    <property type="entry name" value="DinB-like"/>
</dbReference>
<dbReference type="InterPro" id="IPR034660">
    <property type="entry name" value="DinB/YfiT-like"/>
</dbReference>
<dbReference type="InterPro" id="IPR023774">
    <property type="entry name" value="Put_metal_dep_hydrolase_YfiT"/>
</dbReference>
<dbReference type="NCBIfam" id="NF009807">
    <property type="entry name" value="PRK13291.1"/>
    <property type="match status" value="1"/>
</dbReference>
<dbReference type="Pfam" id="PF12867">
    <property type="entry name" value="DinB_2"/>
    <property type="match status" value="1"/>
</dbReference>
<dbReference type="SUPFAM" id="SSF109854">
    <property type="entry name" value="DinB/YfiT-like putative metalloenzymes"/>
    <property type="match status" value="1"/>
</dbReference>
<organism>
    <name type="scientific">Halalkalibacterium halodurans (strain ATCC BAA-125 / DSM 18197 / FERM 7344 / JCM 9153 / C-125)</name>
    <name type="common">Bacillus halodurans</name>
    <dbReference type="NCBI Taxonomy" id="272558"/>
    <lineage>
        <taxon>Bacteria</taxon>
        <taxon>Bacillati</taxon>
        <taxon>Bacillota</taxon>
        <taxon>Bacilli</taxon>
        <taxon>Bacillales</taxon>
        <taxon>Bacillaceae</taxon>
        <taxon>Halalkalibacterium (ex Joshi et al. 2022)</taxon>
    </lineage>
</organism>
<accession>Q9KG38</accession>